<comment type="function">
    <text evidence="1">Catalyzes the initial step of the lipid cycle reactions in the biosynthesis of the cell wall peptidoglycan: transfers peptidoglycan precursor phospho-MurNAc-pentapeptide from UDP-MurNAc-pentapeptide onto the lipid carrier undecaprenyl phosphate, yielding undecaprenyl-pyrophosphoryl-MurNAc-pentapeptide, known as lipid I.</text>
</comment>
<comment type="catalytic activity">
    <reaction evidence="1">
        <text>UDP-N-acetyl-alpha-D-muramoyl-L-alanyl-gamma-D-glutamyl-meso-2,6-diaminopimeloyl-D-alanyl-D-alanine + di-trans,octa-cis-undecaprenyl phosphate = di-trans,octa-cis-undecaprenyl diphospho-N-acetyl-alpha-D-muramoyl-L-alanyl-D-glutamyl-meso-2,6-diaminopimeloyl-D-alanyl-D-alanine + UMP</text>
        <dbReference type="Rhea" id="RHEA:28386"/>
        <dbReference type="ChEBI" id="CHEBI:57865"/>
        <dbReference type="ChEBI" id="CHEBI:60392"/>
        <dbReference type="ChEBI" id="CHEBI:61386"/>
        <dbReference type="ChEBI" id="CHEBI:61387"/>
        <dbReference type="EC" id="2.7.8.13"/>
    </reaction>
</comment>
<comment type="cofactor">
    <cofactor evidence="1">
        <name>Mg(2+)</name>
        <dbReference type="ChEBI" id="CHEBI:18420"/>
    </cofactor>
</comment>
<comment type="pathway">
    <text evidence="1">Cell wall biogenesis; peptidoglycan biosynthesis.</text>
</comment>
<comment type="subcellular location">
    <subcellularLocation>
        <location evidence="1">Cell inner membrane</location>
        <topology evidence="1">Multi-pass membrane protein</topology>
    </subcellularLocation>
</comment>
<comment type="similarity">
    <text evidence="1">Belongs to the glycosyltransferase 4 family. MraY subfamily.</text>
</comment>
<gene>
    <name evidence="1" type="primary">mraY</name>
    <name type="ordered locus">TM1040_2020</name>
</gene>
<keyword id="KW-0131">Cell cycle</keyword>
<keyword id="KW-0132">Cell division</keyword>
<keyword id="KW-0997">Cell inner membrane</keyword>
<keyword id="KW-1003">Cell membrane</keyword>
<keyword id="KW-0133">Cell shape</keyword>
<keyword id="KW-0961">Cell wall biogenesis/degradation</keyword>
<keyword id="KW-0460">Magnesium</keyword>
<keyword id="KW-0472">Membrane</keyword>
<keyword id="KW-0479">Metal-binding</keyword>
<keyword id="KW-0573">Peptidoglycan synthesis</keyword>
<keyword id="KW-1185">Reference proteome</keyword>
<keyword id="KW-0808">Transferase</keyword>
<keyword id="KW-0812">Transmembrane</keyword>
<keyword id="KW-1133">Transmembrane helix</keyword>
<evidence type="ECO:0000255" key="1">
    <source>
        <dbReference type="HAMAP-Rule" id="MF_00038"/>
    </source>
</evidence>
<organism>
    <name type="scientific">Ruegeria sp. (strain TM1040)</name>
    <name type="common">Silicibacter sp.</name>
    <dbReference type="NCBI Taxonomy" id="292414"/>
    <lineage>
        <taxon>Bacteria</taxon>
        <taxon>Pseudomonadati</taxon>
        <taxon>Pseudomonadota</taxon>
        <taxon>Alphaproteobacteria</taxon>
        <taxon>Rhodobacterales</taxon>
        <taxon>Roseobacteraceae</taxon>
        <taxon>Ruegeria</taxon>
    </lineage>
</organism>
<name>MRAY_RUEST</name>
<proteinExistence type="inferred from homology"/>
<feature type="chain" id="PRO_1000003066" description="Phospho-N-acetylmuramoyl-pentapeptide-transferase">
    <location>
        <begin position="1"/>
        <end position="360"/>
    </location>
</feature>
<feature type="transmembrane region" description="Helical" evidence="1">
    <location>
        <begin position="27"/>
        <end position="47"/>
    </location>
</feature>
<feature type="transmembrane region" description="Helical" evidence="1">
    <location>
        <begin position="69"/>
        <end position="89"/>
    </location>
</feature>
<feature type="transmembrane region" description="Helical" evidence="1">
    <location>
        <begin position="93"/>
        <end position="113"/>
    </location>
</feature>
<feature type="transmembrane region" description="Helical" evidence="1">
    <location>
        <begin position="134"/>
        <end position="154"/>
    </location>
</feature>
<feature type="transmembrane region" description="Helical" evidence="1">
    <location>
        <begin position="168"/>
        <end position="188"/>
    </location>
</feature>
<feature type="transmembrane region" description="Helical" evidence="1">
    <location>
        <begin position="199"/>
        <end position="219"/>
    </location>
</feature>
<feature type="transmembrane region" description="Helical" evidence="1">
    <location>
        <begin position="239"/>
        <end position="259"/>
    </location>
</feature>
<feature type="transmembrane region" description="Helical" evidence="1">
    <location>
        <begin position="262"/>
        <end position="282"/>
    </location>
</feature>
<feature type="transmembrane region" description="Helical" evidence="1">
    <location>
        <begin position="288"/>
        <end position="308"/>
    </location>
</feature>
<feature type="transmembrane region" description="Helical" evidence="1">
    <location>
        <begin position="337"/>
        <end position="357"/>
    </location>
</feature>
<reference key="1">
    <citation type="submission" date="2006-05" db="EMBL/GenBank/DDBJ databases">
        <title>Complete sequence of chromosome of Silicibacter sp. TM1040.</title>
        <authorList>
            <consortium name="US DOE Joint Genome Institute"/>
            <person name="Copeland A."/>
            <person name="Lucas S."/>
            <person name="Lapidus A."/>
            <person name="Barry K."/>
            <person name="Detter J.C."/>
            <person name="Glavina del Rio T."/>
            <person name="Hammon N."/>
            <person name="Israni S."/>
            <person name="Dalin E."/>
            <person name="Tice H."/>
            <person name="Pitluck S."/>
            <person name="Brettin T."/>
            <person name="Bruce D."/>
            <person name="Han C."/>
            <person name="Tapia R."/>
            <person name="Goodwin L."/>
            <person name="Thompson L.S."/>
            <person name="Gilna P."/>
            <person name="Schmutz J."/>
            <person name="Larimer F."/>
            <person name="Land M."/>
            <person name="Hauser L."/>
            <person name="Kyrpides N."/>
            <person name="Kim E."/>
            <person name="Belas R."/>
            <person name="Moran M.A."/>
            <person name="Buchan A."/>
            <person name="Gonzalez J.M."/>
            <person name="Schell M.A."/>
            <person name="Sun F."/>
            <person name="Richardson P."/>
        </authorList>
    </citation>
    <scope>NUCLEOTIDE SEQUENCE [LARGE SCALE GENOMIC DNA]</scope>
    <source>
        <strain>TM1040</strain>
    </source>
</reference>
<dbReference type="EC" id="2.7.8.13" evidence="1"/>
<dbReference type="EMBL" id="CP000377">
    <property type="protein sequence ID" value="ABF64752.1"/>
    <property type="molecule type" value="Genomic_DNA"/>
</dbReference>
<dbReference type="RefSeq" id="WP_011539345.1">
    <property type="nucleotide sequence ID" value="NC_008044.1"/>
</dbReference>
<dbReference type="SMR" id="Q1GF14"/>
<dbReference type="STRING" id="292414.TM1040_2020"/>
<dbReference type="KEGG" id="sit:TM1040_2020"/>
<dbReference type="eggNOG" id="COG0472">
    <property type="taxonomic scope" value="Bacteria"/>
</dbReference>
<dbReference type="HOGENOM" id="CLU_023982_0_0_5"/>
<dbReference type="OrthoDB" id="9805475at2"/>
<dbReference type="UniPathway" id="UPA00219"/>
<dbReference type="Proteomes" id="UP000000636">
    <property type="component" value="Chromosome"/>
</dbReference>
<dbReference type="GO" id="GO:0005886">
    <property type="term" value="C:plasma membrane"/>
    <property type="evidence" value="ECO:0007669"/>
    <property type="project" value="UniProtKB-SubCell"/>
</dbReference>
<dbReference type="GO" id="GO:0046872">
    <property type="term" value="F:metal ion binding"/>
    <property type="evidence" value="ECO:0007669"/>
    <property type="project" value="UniProtKB-KW"/>
</dbReference>
<dbReference type="GO" id="GO:0008963">
    <property type="term" value="F:phospho-N-acetylmuramoyl-pentapeptide-transferase activity"/>
    <property type="evidence" value="ECO:0007669"/>
    <property type="project" value="UniProtKB-UniRule"/>
</dbReference>
<dbReference type="GO" id="GO:0051992">
    <property type="term" value="F:UDP-N-acetylmuramoyl-L-alanyl-D-glutamyl-meso-2,6-diaminopimelyl-D-alanyl-D-alanine:undecaprenyl-phosphate transferase activity"/>
    <property type="evidence" value="ECO:0007669"/>
    <property type="project" value="RHEA"/>
</dbReference>
<dbReference type="GO" id="GO:0051301">
    <property type="term" value="P:cell division"/>
    <property type="evidence" value="ECO:0007669"/>
    <property type="project" value="UniProtKB-KW"/>
</dbReference>
<dbReference type="GO" id="GO:0071555">
    <property type="term" value="P:cell wall organization"/>
    <property type="evidence" value="ECO:0007669"/>
    <property type="project" value="UniProtKB-KW"/>
</dbReference>
<dbReference type="GO" id="GO:0009252">
    <property type="term" value="P:peptidoglycan biosynthetic process"/>
    <property type="evidence" value="ECO:0007669"/>
    <property type="project" value="UniProtKB-UniRule"/>
</dbReference>
<dbReference type="GO" id="GO:0008360">
    <property type="term" value="P:regulation of cell shape"/>
    <property type="evidence" value="ECO:0007669"/>
    <property type="project" value="UniProtKB-KW"/>
</dbReference>
<dbReference type="CDD" id="cd06852">
    <property type="entry name" value="GT_MraY"/>
    <property type="match status" value="1"/>
</dbReference>
<dbReference type="HAMAP" id="MF_00038">
    <property type="entry name" value="MraY"/>
    <property type="match status" value="1"/>
</dbReference>
<dbReference type="InterPro" id="IPR000715">
    <property type="entry name" value="Glycosyl_transferase_4"/>
</dbReference>
<dbReference type="InterPro" id="IPR003524">
    <property type="entry name" value="PNAcMuramoyl-5peptid_Trfase"/>
</dbReference>
<dbReference type="InterPro" id="IPR018480">
    <property type="entry name" value="PNAcMuramoyl-5peptid_Trfase_CS"/>
</dbReference>
<dbReference type="NCBIfam" id="TIGR00445">
    <property type="entry name" value="mraY"/>
    <property type="match status" value="1"/>
</dbReference>
<dbReference type="PANTHER" id="PTHR22926">
    <property type="entry name" value="PHOSPHO-N-ACETYLMURAMOYL-PENTAPEPTIDE-TRANSFERASE"/>
    <property type="match status" value="1"/>
</dbReference>
<dbReference type="PANTHER" id="PTHR22926:SF5">
    <property type="entry name" value="PHOSPHO-N-ACETYLMURAMOYL-PENTAPEPTIDE-TRANSFERASE HOMOLOG"/>
    <property type="match status" value="1"/>
</dbReference>
<dbReference type="Pfam" id="PF00953">
    <property type="entry name" value="Glycos_transf_4"/>
    <property type="match status" value="1"/>
</dbReference>
<dbReference type="Pfam" id="PF10555">
    <property type="entry name" value="MraY_sig1"/>
    <property type="match status" value="1"/>
</dbReference>
<dbReference type="PROSITE" id="PS01347">
    <property type="entry name" value="MRAY_1"/>
    <property type="match status" value="1"/>
</dbReference>
<dbReference type="PROSITE" id="PS01348">
    <property type="entry name" value="MRAY_2"/>
    <property type="match status" value="1"/>
</dbReference>
<accession>Q1GF14</accession>
<protein>
    <recommendedName>
        <fullName evidence="1">Phospho-N-acetylmuramoyl-pentapeptide-transferase</fullName>
        <ecNumber evidence="1">2.7.8.13</ecNumber>
    </recommendedName>
    <alternativeName>
        <fullName evidence="1">UDP-MurNAc-pentapeptide phosphotransferase</fullName>
    </alternativeName>
</protein>
<sequence length="360" mass="39017">MLYWLTALSDGGDFFNLFRYITFRAGGAFLTALIFGFVFGKPLINVLRKRQGKGQPIRDDGPEAHLAKVGTPTMGGLLIVGALLFSTLMWARWDNPFVWLVLFVTMSFGLIGFADDYAKVSKQNTSGVSGKVRLLLGFVIAIVAALWASWNHPAELQNQLAMPVFKDVLLNLGYLYVPFCICVIVGAANAVNLTDGLDGLAIMPVMIAAGTLGIIAYAVGRVDFSEYLDVHYVPGTGEILIFTSALFGGGLGFLWYNAPPAAVFMGDTGSLALGGALGAIAISTKHELVLAIVGGLFVVEALSVIIQVLYFKRTGRRVFLMAPIHHHYEKKGWAEPTIVIRFWIISLILAMIGLATLKVR</sequence>